<sequence>MVDTKALRAEQLQRASEISLQDDIASESVRFIAGADVGFEQQGEVTRAAIAVLRYPSLELVEYQVARVATSLPYIPGLLSFREYPALLAAWAQIQQRPQLVFVDGQGIAHPRRLGVASHFGLLVDVPTIGVAKSRLCGNFEPLGDDNGALQPLVDADEQLGWVWRSKSRCNPLFISPGHRVSVGSALEWVQHCIAGYRLPEPTRWADAIASNRPQFQRWVRKSPDLLGKHRDMI</sequence>
<accession>A1JIJ2</accession>
<gene>
    <name evidence="1" type="primary">nfi</name>
    <name type="ordered locus">YE0298</name>
</gene>
<keyword id="KW-0963">Cytoplasm</keyword>
<keyword id="KW-0227">DNA damage</keyword>
<keyword id="KW-0234">DNA repair</keyword>
<keyword id="KW-0255">Endonuclease</keyword>
<keyword id="KW-0378">Hydrolase</keyword>
<keyword id="KW-0460">Magnesium</keyword>
<keyword id="KW-0479">Metal-binding</keyword>
<keyword id="KW-0540">Nuclease</keyword>
<dbReference type="EC" id="3.1.21.7" evidence="1"/>
<dbReference type="EMBL" id="AM286415">
    <property type="protein sequence ID" value="CAL10430.1"/>
    <property type="molecule type" value="Genomic_DNA"/>
</dbReference>
<dbReference type="RefSeq" id="WP_011815390.1">
    <property type="nucleotide sequence ID" value="NC_008800.1"/>
</dbReference>
<dbReference type="RefSeq" id="YP_001004679.1">
    <property type="nucleotide sequence ID" value="NC_008800.1"/>
</dbReference>
<dbReference type="SMR" id="A1JIJ2"/>
<dbReference type="KEGG" id="yen:YE0298"/>
<dbReference type="PATRIC" id="fig|393305.7.peg.390"/>
<dbReference type="eggNOG" id="COG1515">
    <property type="taxonomic scope" value="Bacteria"/>
</dbReference>
<dbReference type="HOGENOM" id="CLU_047631_1_0_6"/>
<dbReference type="OrthoDB" id="9790916at2"/>
<dbReference type="Proteomes" id="UP000000642">
    <property type="component" value="Chromosome"/>
</dbReference>
<dbReference type="GO" id="GO:0005737">
    <property type="term" value="C:cytoplasm"/>
    <property type="evidence" value="ECO:0007669"/>
    <property type="project" value="UniProtKB-SubCell"/>
</dbReference>
<dbReference type="GO" id="GO:0043737">
    <property type="term" value="F:deoxyribonuclease V activity"/>
    <property type="evidence" value="ECO:0007669"/>
    <property type="project" value="UniProtKB-UniRule"/>
</dbReference>
<dbReference type="GO" id="GO:0000287">
    <property type="term" value="F:magnesium ion binding"/>
    <property type="evidence" value="ECO:0007669"/>
    <property type="project" value="UniProtKB-UniRule"/>
</dbReference>
<dbReference type="GO" id="GO:0016891">
    <property type="term" value="F:RNA endonuclease activity, producing 5'-phosphomonoesters"/>
    <property type="evidence" value="ECO:0007669"/>
    <property type="project" value="TreeGrafter"/>
</dbReference>
<dbReference type="GO" id="GO:0003727">
    <property type="term" value="F:single-stranded RNA binding"/>
    <property type="evidence" value="ECO:0007669"/>
    <property type="project" value="TreeGrafter"/>
</dbReference>
<dbReference type="GO" id="GO:0006281">
    <property type="term" value="P:DNA repair"/>
    <property type="evidence" value="ECO:0007669"/>
    <property type="project" value="UniProtKB-UniRule"/>
</dbReference>
<dbReference type="CDD" id="cd06559">
    <property type="entry name" value="Endonuclease_V"/>
    <property type="match status" value="1"/>
</dbReference>
<dbReference type="FunFam" id="3.30.2170.10:FF:000001">
    <property type="entry name" value="Endonuclease V"/>
    <property type="match status" value="1"/>
</dbReference>
<dbReference type="Gene3D" id="3.30.2170.10">
    <property type="entry name" value="archaeoglobus fulgidus dsm 4304 superfamily"/>
    <property type="match status" value="1"/>
</dbReference>
<dbReference type="HAMAP" id="MF_00801">
    <property type="entry name" value="Endonuclease_5"/>
    <property type="match status" value="1"/>
</dbReference>
<dbReference type="InterPro" id="IPR007581">
    <property type="entry name" value="Endonuclease-V"/>
</dbReference>
<dbReference type="NCBIfam" id="NF008629">
    <property type="entry name" value="PRK11617.1"/>
    <property type="match status" value="1"/>
</dbReference>
<dbReference type="PANTHER" id="PTHR28511">
    <property type="entry name" value="ENDONUCLEASE V"/>
    <property type="match status" value="1"/>
</dbReference>
<dbReference type="PANTHER" id="PTHR28511:SF1">
    <property type="entry name" value="ENDONUCLEASE V"/>
    <property type="match status" value="1"/>
</dbReference>
<dbReference type="Pfam" id="PF04493">
    <property type="entry name" value="Endonuclease_5"/>
    <property type="match status" value="1"/>
</dbReference>
<proteinExistence type="inferred from homology"/>
<name>NFI_YERE8</name>
<feature type="chain" id="PRO_1000047010" description="Endonuclease V">
    <location>
        <begin position="1"/>
        <end position="234"/>
    </location>
</feature>
<feature type="binding site" evidence="1">
    <location>
        <position position="36"/>
    </location>
    <ligand>
        <name>Mg(2+)</name>
        <dbReference type="ChEBI" id="CHEBI:18420"/>
    </ligand>
</feature>
<feature type="binding site" evidence="1">
    <location>
        <position position="104"/>
    </location>
    <ligand>
        <name>Mg(2+)</name>
        <dbReference type="ChEBI" id="CHEBI:18420"/>
    </ligand>
</feature>
<feature type="site" description="Interaction with target DNA" evidence="1">
    <location>
        <position position="74"/>
    </location>
</feature>
<organism>
    <name type="scientific">Yersinia enterocolitica serotype O:8 / biotype 1B (strain NCTC 13174 / 8081)</name>
    <dbReference type="NCBI Taxonomy" id="393305"/>
    <lineage>
        <taxon>Bacteria</taxon>
        <taxon>Pseudomonadati</taxon>
        <taxon>Pseudomonadota</taxon>
        <taxon>Gammaproteobacteria</taxon>
        <taxon>Enterobacterales</taxon>
        <taxon>Yersiniaceae</taxon>
        <taxon>Yersinia</taxon>
    </lineage>
</organism>
<comment type="function">
    <text evidence="1">DNA repair enzyme involved in the repair of deaminated bases. Selectively cleaves double-stranded DNA at the second phosphodiester bond 3' to a deoxyinosine leaving behind the intact lesion on the nicked DNA.</text>
</comment>
<comment type="catalytic activity">
    <reaction evidence="1">
        <text>Endonucleolytic cleavage at apurinic or apyrimidinic sites to products with a 5'-phosphate.</text>
        <dbReference type="EC" id="3.1.21.7"/>
    </reaction>
</comment>
<comment type="cofactor">
    <cofactor evidence="1">
        <name>Mg(2+)</name>
        <dbReference type="ChEBI" id="CHEBI:18420"/>
    </cofactor>
</comment>
<comment type="subcellular location">
    <subcellularLocation>
        <location evidence="1">Cytoplasm</location>
    </subcellularLocation>
</comment>
<comment type="similarity">
    <text evidence="1">Belongs to the endonuclease V family.</text>
</comment>
<evidence type="ECO:0000255" key="1">
    <source>
        <dbReference type="HAMAP-Rule" id="MF_00801"/>
    </source>
</evidence>
<reference key="1">
    <citation type="journal article" date="2006" name="PLoS Genet.">
        <title>The complete genome sequence and comparative genome analysis of the high pathogenicity Yersinia enterocolitica strain 8081.</title>
        <authorList>
            <person name="Thomson N.R."/>
            <person name="Howard S."/>
            <person name="Wren B.W."/>
            <person name="Holden M.T.G."/>
            <person name="Crossman L."/>
            <person name="Challis G.L."/>
            <person name="Churcher C."/>
            <person name="Mungall K."/>
            <person name="Brooks K."/>
            <person name="Chillingworth T."/>
            <person name="Feltwell T."/>
            <person name="Abdellah Z."/>
            <person name="Hauser H."/>
            <person name="Jagels K."/>
            <person name="Maddison M."/>
            <person name="Moule S."/>
            <person name="Sanders M."/>
            <person name="Whitehead S."/>
            <person name="Quail M.A."/>
            <person name="Dougan G."/>
            <person name="Parkhill J."/>
            <person name="Prentice M.B."/>
        </authorList>
    </citation>
    <scope>NUCLEOTIDE SEQUENCE [LARGE SCALE GENOMIC DNA]</scope>
    <source>
        <strain>NCTC 13174 / 8081</strain>
    </source>
</reference>
<protein>
    <recommendedName>
        <fullName evidence="1">Endonuclease V</fullName>
        <ecNumber evidence="1">3.1.21.7</ecNumber>
    </recommendedName>
    <alternativeName>
        <fullName evidence="1">Deoxyinosine 3'endonuclease</fullName>
    </alternativeName>
    <alternativeName>
        <fullName evidence="1">Deoxyribonuclease V</fullName>
        <shortName evidence="1">DNase V</shortName>
    </alternativeName>
</protein>